<name>LPPB_HISSO</name>
<protein>
    <recommendedName>
        <fullName>Outer membrane antigenic lipoprotein B</fullName>
    </recommendedName>
</protein>
<dbReference type="EMBL" id="L10653">
    <property type="protein sequence ID" value="AAA72348.1"/>
    <property type="status" value="ALT_FRAME"/>
    <property type="molecule type" value="Genomic_DNA"/>
</dbReference>
<dbReference type="PIR" id="T09554">
    <property type="entry name" value="T09554"/>
</dbReference>
<dbReference type="GO" id="GO:0032153">
    <property type="term" value="C:cell division site"/>
    <property type="evidence" value="ECO:0007669"/>
    <property type="project" value="TreeGrafter"/>
</dbReference>
<dbReference type="GO" id="GO:0009279">
    <property type="term" value="C:cell outer membrane"/>
    <property type="evidence" value="ECO:0007669"/>
    <property type="project" value="UniProtKB-SubCell"/>
</dbReference>
<dbReference type="GO" id="GO:0004222">
    <property type="term" value="F:metalloendopeptidase activity"/>
    <property type="evidence" value="ECO:0007669"/>
    <property type="project" value="TreeGrafter"/>
</dbReference>
<dbReference type="CDD" id="cd00118">
    <property type="entry name" value="LysM"/>
    <property type="match status" value="1"/>
</dbReference>
<dbReference type="CDD" id="cd12797">
    <property type="entry name" value="M23_peptidase"/>
    <property type="match status" value="1"/>
</dbReference>
<dbReference type="Gene3D" id="2.70.70.10">
    <property type="entry name" value="Glucose Permease (Domain IIA)"/>
    <property type="match status" value="1"/>
</dbReference>
<dbReference type="Gene3D" id="3.10.350.10">
    <property type="entry name" value="LysM domain"/>
    <property type="match status" value="1"/>
</dbReference>
<dbReference type="InterPro" id="IPR050570">
    <property type="entry name" value="Cell_wall_metabolism_enzyme"/>
</dbReference>
<dbReference type="InterPro" id="IPR011055">
    <property type="entry name" value="Dup_hybrid_motif"/>
</dbReference>
<dbReference type="InterPro" id="IPR018392">
    <property type="entry name" value="LysM_dom"/>
</dbReference>
<dbReference type="InterPro" id="IPR036779">
    <property type="entry name" value="LysM_dom_sf"/>
</dbReference>
<dbReference type="InterPro" id="IPR016047">
    <property type="entry name" value="Peptidase_M23"/>
</dbReference>
<dbReference type="PANTHER" id="PTHR21666:SF263">
    <property type="entry name" value="MUREIN HYDROLASE ACTIVATOR NLPD"/>
    <property type="match status" value="1"/>
</dbReference>
<dbReference type="PANTHER" id="PTHR21666">
    <property type="entry name" value="PEPTIDASE-RELATED"/>
    <property type="match status" value="1"/>
</dbReference>
<dbReference type="Pfam" id="PF01476">
    <property type="entry name" value="LysM"/>
    <property type="match status" value="1"/>
</dbReference>
<dbReference type="Pfam" id="PF01551">
    <property type="entry name" value="Peptidase_M23"/>
    <property type="match status" value="1"/>
</dbReference>
<dbReference type="SMART" id="SM00257">
    <property type="entry name" value="LysM"/>
    <property type="match status" value="1"/>
</dbReference>
<dbReference type="SUPFAM" id="SSF51261">
    <property type="entry name" value="Duplicated hybrid motif"/>
    <property type="match status" value="1"/>
</dbReference>
<dbReference type="PROSITE" id="PS51782">
    <property type="entry name" value="LYSM"/>
    <property type="match status" value="1"/>
</dbReference>
<dbReference type="PROSITE" id="PS51257">
    <property type="entry name" value="PROKAR_LIPOPROTEIN"/>
    <property type="match status" value="1"/>
</dbReference>
<gene>
    <name type="primary">lppB</name>
</gene>
<organism>
    <name type="scientific">Histophilus somni</name>
    <name type="common">Haemophilus somnus</name>
    <dbReference type="NCBI Taxonomy" id="731"/>
    <lineage>
        <taxon>Bacteria</taxon>
        <taxon>Pseudomonadati</taxon>
        <taxon>Pseudomonadota</taxon>
        <taxon>Gammaproteobacteria</taxon>
        <taxon>Pasteurellales</taxon>
        <taxon>Pasteurellaceae</taxon>
        <taxon>Histophilus</taxon>
    </lineage>
</organism>
<reference key="1">
    <citation type="journal article" date="1993" name="Infect. Immun.">
        <title>Molecular cloning, nucleotide sequence, and characterization of lppB, encoding an antigenic 40-kilodalton lipoprotein of Haemophilus somnus.</title>
        <authorList>
            <person name="Theisen M."/>
            <person name="Rioux C.R."/>
            <person name="Potter A.A."/>
        </authorList>
    </citation>
    <scope>NUCLEOTIDE SEQUENCE [GENOMIC DNA]</scope>
    <source>
        <strain>HS25</strain>
    </source>
</reference>
<comment type="function">
    <text>May be a virulence determinant.</text>
</comment>
<comment type="subcellular location">
    <subcellularLocation>
        <location>Cell outer membrane</location>
        <topology>Lipid-anchor</topology>
    </subcellularLocation>
</comment>
<comment type="similarity">
    <text evidence="3">Belongs to the E.coli NlpD/Haemophilus LppB family.</text>
</comment>
<comment type="sequence caution" evidence="3">
    <conflict type="frameshift">
        <sequence resource="EMBL-CDS" id="AAA72348"/>
    </conflict>
</comment>
<sequence>MKKFLPLSISITVLAACSSHTPAPVENAKDLAPSIIKPINGTNSTAWEPQVIQQKMPESMRVPKATNSTYQPEIIQQNQQKTESIAKKQALQNFEIPRDPKTNVPVYSKIDKGFYKGDTYKVRKGDTMFLIAYISGMDIKELATLNNMSEPYHLSIGQVLKIANNIPDSNMIPTQTINESEVTQNTVNETWNANKPTNEQMKPVATPTHSTMPINKTPPATSNIAWIWPTNGKIIQGFSSADGGNKGIDISGSRGQAVNAAAAGRVVYAGDALRGYGNLIIIKHNDSYLSAYAHNESILVKDQQEVKAGQQIAKMGSSGTNTIKLHFXIRYFGQSVD</sequence>
<proteinExistence type="inferred from homology"/>
<keyword id="KW-0998">Cell outer membrane</keyword>
<keyword id="KW-0449">Lipoprotein</keyword>
<keyword id="KW-0472">Membrane</keyword>
<keyword id="KW-0564">Palmitate</keyword>
<keyword id="KW-0732">Signal</keyword>
<keyword id="KW-0843">Virulence</keyword>
<feature type="signal peptide" evidence="3">
    <location>
        <begin position="1"/>
        <end position="16"/>
    </location>
</feature>
<feature type="chain" id="PRO_0000018035" description="Outer membrane antigenic lipoprotein B">
    <location>
        <begin position="17"/>
        <end position="337" status="greater than"/>
    </location>
</feature>
<feature type="domain" description="LysM" evidence="1">
    <location>
        <begin position="118"/>
        <end position="162"/>
    </location>
</feature>
<feature type="region of interest" description="Disordered" evidence="2">
    <location>
        <begin position="192"/>
        <end position="215"/>
    </location>
</feature>
<feature type="lipid moiety-binding region" description="N-palmitoyl cysteine" evidence="3">
    <location>
        <position position="17"/>
    </location>
</feature>
<feature type="lipid moiety-binding region" description="S-diacylglycerol cysteine" evidence="3">
    <location>
        <position position="17"/>
    </location>
</feature>
<feature type="non-terminal residue">
    <location>
        <position position="337"/>
    </location>
</feature>
<accession>P36685</accession>
<evidence type="ECO:0000255" key="1">
    <source>
        <dbReference type="PROSITE-ProRule" id="PRU01118"/>
    </source>
</evidence>
<evidence type="ECO:0000256" key="2">
    <source>
        <dbReference type="SAM" id="MobiDB-lite"/>
    </source>
</evidence>
<evidence type="ECO:0000305" key="3"/>